<organism>
    <name type="scientific">Clostridium acetobutylicum (strain ATCC 824 / DSM 792 / JCM 1419 / IAM 19013 / LMG 5710 / NBRC 13948 / NRRL B-527 / VKM B-1787 / 2291 / W)</name>
    <dbReference type="NCBI Taxonomy" id="272562"/>
    <lineage>
        <taxon>Bacteria</taxon>
        <taxon>Bacillati</taxon>
        <taxon>Bacillota</taxon>
        <taxon>Clostridia</taxon>
        <taxon>Eubacteriales</taxon>
        <taxon>Clostridiaceae</taxon>
        <taxon>Clostridium</taxon>
    </lineage>
</organism>
<feature type="chain" id="PRO_0000162395" description="Uncharacterized isomerase CA_C3446">
    <location>
        <begin position="1"/>
        <end position="302"/>
    </location>
</feature>
<feature type="active site" evidence="1">
    <location>
        <position position="48"/>
    </location>
</feature>
<dbReference type="EC" id="5.1.-.-"/>
<dbReference type="EMBL" id="AE001437">
    <property type="protein sequence ID" value="AAK81376.1"/>
    <property type="molecule type" value="Genomic_DNA"/>
</dbReference>
<dbReference type="PIR" id="E97323">
    <property type="entry name" value="E97323"/>
</dbReference>
<dbReference type="RefSeq" id="NP_350036.1">
    <property type="nucleotide sequence ID" value="NC_003030.1"/>
</dbReference>
<dbReference type="RefSeq" id="WP_010966716.1">
    <property type="nucleotide sequence ID" value="NC_003030.1"/>
</dbReference>
<dbReference type="SMR" id="P58293"/>
<dbReference type="STRING" id="272562.CA_C3446"/>
<dbReference type="KEGG" id="cac:CA_C3446"/>
<dbReference type="PATRIC" id="fig|272562.8.peg.3630"/>
<dbReference type="eggNOG" id="COG0384">
    <property type="taxonomic scope" value="Bacteria"/>
</dbReference>
<dbReference type="HOGENOM" id="CLU_048756_0_2_9"/>
<dbReference type="OrthoDB" id="9788221at2"/>
<dbReference type="Proteomes" id="UP000000814">
    <property type="component" value="Chromosome"/>
</dbReference>
<dbReference type="GO" id="GO:0005737">
    <property type="term" value="C:cytoplasm"/>
    <property type="evidence" value="ECO:0007669"/>
    <property type="project" value="TreeGrafter"/>
</dbReference>
<dbReference type="GO" id="GO:0016853">
    <property type="term" value="F:isomerase activity"/>
    <property type="evidence" value="ECO:0007669"/>
    <property type="project" value="UniProtKB-KW"/>
</dbReference>
<dbReference type="GO" id="GO:0009058">
    <property type="term" value="P:biosynthetic process"/>
    <property type="evidence" value="ECO:0007669"/>
    <property type="project" value="InterPro"/>
</dbReference>
<dbReference type="Gene3D" id="3.10.310.10">
    <property type="entry name" value="Diaminopimelate Epimerase, Chain A, domain 1"/>
    <property type="match status" value="2"/>
</dbReference>
<dbReference type="InterPro" id="IPR003719">
    <property type="entry name" value="Phenazine_PhzF-like"/>
</dbReference>
<dbReference type="NCBIfam" id="TIGR00654">
    <property type="entry name" value="PhzF_family"/>
    <property type="match status" value="1"/>
</dbReference>
<dbReference type="NCBIfam" id="NF007625">
    <property type="entry name" value="PRK10281.1"/>
    <property type="match status" value="1"/>
</dbReference>
<dbReference type="PANTHER" id="PTHR13774:SF39">
    <property type="entry name" value="BIOSYNTHESIS PROTEIN, PUTATIVE-RELATED"/>
    <property type="match status" value="1"/>
</dbReference>
<dbReference type="PANTHER" id="PTHR13774">
    <property type="entry name" value="PHENAZINE BIOSYNTHESIS PROTEIN"/>
    <property type="match status" value="1"/>
</dbReference>
<dbReference type="Pfam" id="PF02567">
    <property type="entry name" value="PhzC-PhzF"/>
    <property type="match status" value="1"/>
</dbReference>
<dbReference type="PIRSF" id="PIRSF016184">
    <property type="entry name" value="PhzC_PhzF"/>
    <property type="match status" value="1"/>
</dbReference>
<dbReference type="SUPFAM" id="SSF54506">
    <property type="entry name" value="Diaminopimelate epimerase-like"/>
    <property type="match status" value="1"/>
</dbReference>
<sequence>MIRKYNLYQIDSFTKEKFTGNPAGVITNADGLTDYEMQKIARELNNSETAFIFSSKDERYDAWVRFFTPTSEVPICGHATIAAHYARAIENNLETSRVYHKTGAGILPVDVIKENDDYKIIMTQGKIEFGSVIDGEKKEKLLRALNIEKSDLLENYKIQIVSTGHSKVMIGIKSLKTLNKLQPNYDVLSKLSKIIKCNGYYVFAVTSEDSDILIHGRMFAPAIGINEDPVTGNANGPLGAYLVHHKLACYDNSIFKFKAKQGEAIGRQGIIEVEVRVDKEEPVEVKISGNAVVVFKSELVLN</sequence>
<protein>
    <recommendedName>
        <fullName>Uncharacterized isomerase CA_C3446</fullName>
        <ecNumber>5.1.-.-</ecNumber>
    </recommendedName>
</protein>
<accession>P58293</accession>
<comment type="similarity">
    <text evidence="2">Belongs to the PhzF family.</text>
</comment>
<name>Y3446_CLOAB</name>
<evidence type="ECO:0000250" key="1"/>
<evidence type="ECO:0000305" key="2"/>
<proteinExistence type="inferred from homology"/>
<keyword id="KW-0413">Isomerase</keyword>
<keyword id="KW-1185">Reference proteome</keyword>
<gene>
    <name type="ordered locus">CA_C3446</name>
</gene>
<reference key="1">
    <citation type="journal article" date="2001" name="J. Bacteriol.">
        <title>Genome sequence and comparative analysis of the solvent-producing bacterium Clostridium acetobutylicum.</title>
        <authorList>
            <person name="Noelling J."/>
            <person name="Breton G."/>
            <person name="Omelchenko M.V."/>
            <person name="Makarova K.S."/>
            <person name="Zeng Q."/>
            <person name="Gibson R."/>
            <person name="Lee H.M."/>
            <person name="Dubois J."/>
            <person name="Qiu D."/>
            <person name="Hitti J."/>
            <person name="Wolf Y.I."/>
            <person name="Tatusov R.L."/>
            <person name="Sabathe F."/>
            <person name="Doucette-Stamm L.A."/>
            <person name="Soucaille P."/>
            <person name="Daly M.J."/>
            <person name="Bennett G.N."/>
            <person name="Koonin E.V."/>
            <person name="Smith D.R."/>
        </authorList>
    </citation>
    <scope>NUCLEOTIDE SEQUENCE [LARGE SCALE GENOMIC DNA]</scope>
    <source>
        <strain>ATCC 824 / DSM 792 / JCM 1419 / IAM 19013 / LMG 5710 / NBRC 13948 / NRRL B-527 / VKM B-1787 / 2291 / W</strain>
    </source>
</reference>